<reference evidence="10" key="1">
    <citation type="submission" date="2000-04" db="EMBL/GenBank/DDBJ databases">
        <title>Isolation and Functional Characterization of the CfNT1 and CfNT2 nucleoside transporter Genes from Crithidia fasciculata.</title>
        <authorList>
            <person name="Liu W."/>
            <person name="Ntaba D."/>
            <person name="Carter N.S."/>
            <person name="Landfear S.M."/>
            <person name="Ullman B."/>
        </authorList>
    </citation>
    <scope>NUCLEOTIDE SEQUENCE [GENOMIC DNA]</scope>
</reference>
<reference evidence="9" key="2">
    <citation type="journal article" date="2005" name="Mol. Biochem. Parasitol.">
        <title>Identification and characterization of purine nucleoside transporters from Crithidia fasciculata.</title>
        <authorList>
            <person name="Liu W."/>
            <person name="Arendt C.S."/>
            <person name="Gessford S.K."/>
            <person name="Ntaba D."/>
            <person name="Carter N.S."/>
            <person name="Ullman B."/>
        </authorList>
    </citation>
    <scope>FUNCTION</scope>
    <scope>TRANSPORTER ACTIVITY</scope>
    <scope>BIOPHYSICOCHEMICAL PROPERTIES</scope>
    <scope>INDUCTION BY PUFINE STARVATION</scope>
</reference>
<reference evidence="9" key="3">
    <citation type="journal article" date="2010" name="J. Biol. Chem.">
        <title>Role of transmembrane domain 4 in ligand permeation by Crithidia fasciculata equilibrative nucleoside transporter 2 (CfNT2).</title>
        <authorList>
            <person name="Arendt C.S."/>
            <person name="Ullman B."/>
        </authorList>
    </citation>
    <scope>FUNCTION</scope>
    <scope>TRANSPORTER ACTIVITY</scope>
    <scope>SUBCELLULAR LOCATION</scope>
</reference>
<reference evidence="9" key="4">
    <citation type="journal article" date="2013" name="Mol. Biochem. Parasitol.">
        <title>Crithidia fasciculata adenosine transporter 1 (CfAT1), a novel high-affinity equilibrative nucleoside transporter specific for adenosine.</title>
        <authorList>
            <person name="Arendt C.S."/>
        </authorList>
    </citation>
    <scope>FUNCTION</scope>
    <scope>TRANSPORTER ACTIVITY</scope>
    <scope>BIOPHYSICOCHEMICAL PROPERTIES</scope>
    <scope>MUTAGENESIS OF THR-153</scope>
</reference>
<organism evidence="10">
    <name type="scientific">Crithidia fasciculata</name>
    <dbReference type="NCBI Taxonomy" id="5656"/>
    <lineage>
        <taxon>Eukaryota</taxon>
        <taxon>Discoba</taxon>
        <taxon>Euglenozoa</taxon>
        <taxon>Kinetoplastea</taxon>
        <taxon>Metakinetoplastina</taxon>
        <taxon>Trypanosomatida</taxon>
        <taxon>Trypanosomatidae</taxon>
        <taxon>Leishmaniinae</taxon>
        <taxon>Crithidia</taxon>
    </lineage>
</organism>
<evidence type="ECO:0000255" key="1"/>
<evidence type="ECO:0000256" key="2">
    <source>
        <dbReference type="SAM" id="MobiDB-lite"/>
    </source>
</evidence>
<evidence type="ECO:0000269" key="3">
    <source>
    </source>
</evidence>
<evidence type="ECO:0000269" key="4">
    <source>
    </source>
</evidence>
<evidence type="ECO:0000269" key="5">
    <source>
    </source>
</evidence>
<evidence type="ECO:0000303" key="6">
    <source>
    </source>
</evidence>
<evidence type="ECO:0000303" key="7">
    <source>
    </source>
</evidence>
<evidence type="ECO:0000303" key="8">
    <source>
    </source>
</evidence>
<evidence type="ECO:0000305" key="9"/>
<evidence type="ECO:0000312" key="10">
    <source>
        <dbReference type="EMBL" id="AAG22610.1"/>
    </source>
</evidence>
<keyword id="KW-1003">Cell membrane</keyword>
<keyword id="KW-0472">Membrane</keyword>
<keyword id="KW-0812">Transmembrane</keyword>
<keyword id="KW-1133">Transmembrane helix</keyword>
<keyword id="KW-0813">Transport</keyword>
<comment type="function">
    <text evidence="3 4 5">Nucleoside transporter with broad substrate specificity (PubMed:15694482). Transports adenosine with high affinity (PubMed:15694482, PubMed:20037157, PubMed:24120444). Can also transport hypoxanthine, inosine, uridine and cytidine (PubMed:15694482).</text>
</comment>
<comment type="catalytic activity">
    <reaction evidence="3 4 5">
        <text>adenosine(in) = adenosine(out)</text>
        <dbReference type="Rhea" id="RHEA:75343"/>
        <dbReference type="ChEBI" id="CHEBI:16335"/>
    </reaction>
</comment>
<comment type="catalytic activity">
    <reaction evidence="3">
        <text>hypoxanthine(out) = hypoxanthine(in)</text>
        <dbReference type="Rhea" id="RHEA:71515"/>
        <dbReference type="ChEBI" id="CHEBI:17368"/>
    </reaction>
</comment>
<comment type="catalytic activity">
    <reaction evidence="3">
        <text>inosine(in) = inosine(out)</text>
        <dbReference type="Rhea" id="RHEA:75375"/>
        <dbReference type="ChEBI" id="CHEBI:17596"/>
    </reaction>
</comment>
<comment type="catalytic activity">
    <reaction evidence="3">
        <text>uridine(out) = uridine(in)</text>
        <dbReference type="Rhea" id="RHEA:71519"/>
        <dbReference type="ChEBI" id="CHEBI:16704"/>
    </reaction>
</comment>
<comment type="catalytic activity">
    <reaction evidence="3">
        <text>cytidine(in) = cytidine(out)</text>
        <dbReference type="Rhea" id="RHEA:75367"/>
        <dbReference type="ChEBI" id="CHEBI:17562"/>
    </reaction>
</comment>
<comment type="biophysicochemical properties">
    <kinetics>
        <KM evidence="3">25 uM for adenosine</KM>
        <KM evidence="3">140 uM for hypoxanthine</KM>
        <KM evidence="3">210 uM for inosine</KM>
        <KM evidence="5">59 uM for adenosine</KM>
    </kinetics>
</comment>
<comment type="subcellular location">
    <subcellularLocation>
        <location evidence="4">Cell membrane</location>
        <topology evidence="1">Multi-pass membrane protein</topology>
    </subcellularLocation>
</comment>
<comment type="induction">
    <text evidence="3">Slightly up-regulated by pufine starvation.</text>
</comment>
<comment type="miscellaneous">
    <text evidence="4">Can transport tubercidin, a toxic adenosine analog, but not formycin B, a toxic inosine analog.</text>
</comment>
<comment type="similarity">
    <text evidence="9">Belongs to the SLC29A/ENT transporter (TC 2.A.57) family.</text>
</comment>
<protein>
    <recommendedName>
        <fullName evidence="6">Nucleoside transporter 1</fullName>
        <shortName evidence="6 7 8">CfNT1</shortName>
    </recommendedName>
</protein>
<proteinExistence type="evidence at protein level"/>
<accession>Q9GTP5</accession>
<sequence>MSLKGGTAAPAPMAPPRKWYDMTSAEFYVYVVAFMCGISIMMPINAVFSAPSYMLEYYLYATKDPFLVPKMTNFWTNVMTYYNLISMVTSLVVEPLTLLKSFRKIPMLVRLLGGLSVLIIEIIVLMVVPARGTTEAGAVATMCIAGFIGGLGTSIFESTVYGMFGAFPPSFTSIMMGGVGISGVLTSLIQIIVKAALPDTYEGVKKQSYIYYSLDVGIQAATFIALIMMRFNSFAQLHFGDLGGVKSKVDAGSLAGAGENVREPGAEATELEQYTEPAIGQIQEKNAEAHKDDPLAERELSEEESGDSRAVEAAGEAPTSNEILRATSVFSVLRSVKWMFVACGFNFLITLFLFPGIATGMFPESKWFATVAVFIFNCCDVLGRFSSAFRITWPRRYNQRWIIVAASFARVIFVPLLLLHSYHYIPSEAYGYVMQVVFGLSSGYIASMALVLGPQSKGIDNDGKRFVAGTLMGISILVGGTIGTVLSIMTQTIRETY</sequence>
<dbReference type="EMBL" id="AF261946">
    <property type="protein sequence ID" value="AAG22610.1"/>
    <property type="molecule type" value="Genomic_DNA"/>
</dbReference>
<dbReference type="VEuPathDB" id="TriTrypDB:CFAC1_240044800"/>
<dbReference type="GO" id="GO:0005886">
    <property type="term" value="C:plasma membrane"/>
    <property type="evidence" value="ECO:0007669"/>
    <property type="project" value="UniProtKB-SubCell"/>
</dbReference>
<dbReference type="GO" id="GO:0005337">
    <property type="term" value="F:nucleoside transmembrane transporter activity"/>
    <property type="evidence" value="ECO:0007669"/>
    <property type="project" value="InterPro"/>
</dbReference>
<dbReference type="InterPro" id="IPR034764">
    <property type="entry name" value="ENT1/ENT2"/>
</dbReference>
<dbReference type="InterPro" id="IPR002259">
    <property type="entry name" value="Eqnu_transpt"/>
</dbReference>
<dbReference type="InterPro" id="IPR036259">
    <property type="entry name" value="MFS_trans_sf"/>
</dbReference>
<dbReference type="NCBIfam" id="TIGR00939">
    <property type="entry name" value="2a57"/>
    <property type="match status" value="1"/>
</dbReference>
<dbReference type="PANTHER" id="PTHR10332">
    <property type="entry name" value="EQUILIBRATIVE NUCLEOSIDE TRANSPORTER"/>
    <property type="match status" value="1"/>
</dbReference>
<dbReference type="PANTHER" id="PTHR10332:SF10">
    <property type="entry name" value="EQUILIBRATIVE NUCLEOSIDE TRANSPORTER 4"/>
    <property type="match status" value="1"/>
</dbReference>
<dbReference type="Pfam" id="PF01733">
    <property type="entry name" value="Nucleoside_tran"/>
    <property type="match status" value="1"/>
</dbReference>
<dbReference type="PRINTS" id="PR01130">
    <property type="entry name" value="DERENTRNSPRT"/>
</dbReference>
<dbReference type="SUPFAM" id="SSF103473">
    <property type="entry name" value="MFS general substrate transporter"/>
    <property type="match status" value="1"/>
</dbReference>
<name>NT1_CRIFA</name>
<feature type="chain" id="PRO_0000461589" description="Nucleoside transporter 1">
    <location>
        <begin position="1"/>
        <end position="497"/>
    </location>
</feature>
<feature type="topological domain" description="Cytoplasmic" evidence="9">
    <location>
        <begin position="1"/>
        <end position="26"/>
    </location>
</feature>
<feature type="transmembrane region" description="Helical" evidence="1">
    <location>
        <begin position="27"/>
        <end position="47"/>
    </location>
</feature>
<feature type="topological domain" description="Extracellular" evidence="9">
    <location>
        <begin position="48"/>
        <end position="77"/>
    </location>
</feature>
<feature type="transmembrane region" description="Helical" evidence="1">
    <location>
        <begin position="78"/>
        <end position="98"/>
    </location>
</feature>
<feature type="topological domain" description="Cytoplasmic" evidence="9">
    <location>
        <begin position="99"/>
        <end position="107"/>
    </location>
</feature>
<feature type="transmembrane region" description="Helical" evidence="1">
    <location>
        <begin position="108"/>
        <end position="128"/>
    </location>
</feature>
<feature type="topological domain" description="Extracellular" evidence="9">
    <location>
        <begin position="129"/>
        <end position="135"/>
    </location>
</feature>
<feature type="transmembrane region" description="Helical" evidence="1">
    <location>
        <begin position="136"/>
        <end position="156"/>
    </location>
</feature>
<feature type="topological domain" description="Cytoplasmic" evidence="9">
    <location>
        <begin position="157"/>
        <end position="172"/>
    </location>
</feature>
<feature type="transmembrane region" description="Helical" evidence="1">
    <location>
        <begin position="173"/>
        <end position="193"/>
    </location>
</feature>
<feature type="topological domain" description="Extracellular" evidence="9">
    <location>
        <begin position="194"/>
        <end position="208"/>
    </location>
</feature>
<feature type="transmembrane region" description="Helical" evidence="1">
    <location>
        <begin position="209"/>
        <end position="229"/>
    </location>
</feature>
<feature type="topological domain" description="Cytoplasmic" evidence="9">
    <location>
        <begin position="230"/>
        <end position="337"/>
    </location>
</feature>
<feature type="transmembrane region" description="Helical" evidence="1">
    <location>
        <begin position="338"/>
        <end position="358"/>
    </location>
</feature>
<feature type="topological domain" description="Extracellular" evidence="9">
    <location>
        <begin position="359"/>
        <end position="361"/>
    </location>
</feature>
<feature type="transmembrane region" description="Helical" evidence="1">
    <location>
        <begin position="362"/>
        <end position="382"/>
    </location>
</feature>
<feature type="topological domain" description="Cytoplasmic" evidence="9">
    <location>
        <begin position="383"/>
        <end position="400"/>
    </location>
</feature>
<feature type="transmembrane region" description="Helical" evidence="1">
    <location>
        <begin position="401"/>
        <end position="421"/>
    </location>
</feature>
<feature type="topological domain" description="Extracellular" evidence="9">
    <location>
        <begin position="422"/>
        <end position="432"/>
    </location>
</feature>
<feature type="transmembrane region" description="Helical" evidence="1">
    <location>
        <begin position="433"/>
        <end position="453"/>
    </location>
</feature>
<feature type="topological domain" description="Cytoplasmic" evidence="9">
    <location>
        <begin position="454"/>
        <end position="465"/>
    </location>
</feature>
<feature type="transmembrane region" description="Helical" evidence="1">
    <location>
        <begin position="466"/>
        <end position="486"/>
    </location>
</feature>
<feature type="topological domain" description="Extracellular" evidence="9">
    <location>
        <begin position="487"/>
        <end position="497"/>
    </location>
</feature>
<feature type="region of interest" description="Disordered" evidence="2">
    <location>
        <begin position="286"/>
        <end position="316"/>
    </location>
</feature>
<feature type="compositionally biased region" description="Basic and acidic residues" evidence="2">
    <location>
        <begin position="286"/>
        <end position="299"/>
    </location>
</feature>
<feature type="mutagenesis site" description="Increases apparent affinity for adenosine." evidence="5">
    <original>T</original>
    <variation>K</variation>
    <location>
        <position position="153"/>
    </location>
</feature>